<comment type="function">
    <text evidence="1">Condenses 4-methyl-5-(beta-hydroxyethyl)thiazole monophosphate (THZ-P) and 2-methyl-4-amino-5-hydroxymethyl pyrimidine pyrophosphate (HMP-PP) to form thiamine monophosphate (TMP).</text>
</comment>
<comment type="catalytic activity">
    <reaction evidence="1">
        <text>2-[(2R,5Z)-2-carboxy-4-methylthiazol-5(2H)-ylidene]ethyl phosphate + 4-amino-2-methyl-5-(diphosphooxymethyl)pyrimidine + 2 H(+) = thiamine phosphate + CO2 + diphosphate</text>
        <dbReference type="Rhea" id="RHEA:47844"/>
        <dbReference type="ChEBI" id="CHEBI:15378"/>
        <dbReference type="ChEBI" id="CHEBI:16526"/>
        <dbReference type="ChEBI" id="CHEBI:33019"/>
        <dbReference type="ChEBI" id="CHEBI:37575"/>
        <dbReference type="ChEBI" id="CHEBI:57841"/>
        <dbReference type="ChEBI" id="CHEBI:62899"/>
        <dbReference type="EC" id="2.5.1.3"/>
    </reaction>
</comment>
<comment type="catalytic activity">
    <reaction evidence="1">
        <text>2-(2-carboxy-4-methylthiazol-5-yl)ethyl phosphate + 4-amino-2-methyl-5-(diphosphooxymethyl)pyrimidine + 2 H(+) = thiamine phosphate + CO2 + diphosphate</text>
        <dbReference type="Rhea" id="RHEA:47848"/>
        <dbReference type="ChEBI" id="CHEBI:15378"/>
        <dbReference type="ChEBI" id="CHEBI:16526"/>
        <dbReference type="ChEBI" id="CHEBI:33019"/>
        <dbReference type="ChEBI" id="CHEBI:37575"/>
        <dbReference type="ChEBI" id="CHEBI:57841"/>
        <dbReference type="ChEBI" id="CHEBI:62890"/>
        <dbReference type="EC" id="2.5.1.3"/>
    </reaction>
</comment>
<comment type="catalytic activity">
    <reaction evidence="1">
        <text>4-methyl-5-(2-phosphooxyethyl)-thiazole + 4-amino-2-methyl-5-(diphosphooxymethyl)pyrimidine + H(+) = thiamine phosphate + diphosphate</text>
        <dbReference type="Rhea" id="RHEA:22328"/>
        <dbReference type="ChEBI" id="CHEBI:15378"/>
        <dbReference type="ChEBI" id="CHEBI:33019"/>
        <dbReference type="ChEBI" id="CHEBI:37575"/>
        <dbReference type="ChEBI" id="CHEBI:57841"/>
        <dbReference type="ChEBI" id="CHEBI:58296"/>
        <dbReference type="EC" id="2.5.1.3"/>
    </reaction>
</comment>
<comment type="cofactor">
    <cofactor evidence="1">
        <name>Mg(2+)</name>
        <dbReference type="ChEBI" id="CHEBI:18420"/>
    </cofactor>
    <text evidence="1">Binds 1 Mg(2+) ion per subunit.</text>
</comment>
<comment type="pathway">
    <text evidence="1">Cofactor biosynthesis; thiamine diphosphate biosynthesis; thiamine phosphate from 4-amino-2-methyl-5-diphosphomethylpyrimidine and 4-methyl-5-(2-phosphoethyl)-thiazole: step 1/1.</text>
</comment>
<comment type="similarity">
    <text evidence="1">Belongs to the thiamine-phosphate synthase family.</text>
</comment>
<dbReference type="EC" id="2.5.1.3" evidence="1"/>
<dbReference type="EMBL" id="CP000492">
    <property type="protein sequence ID" value="ABL65554.1"/>
    <property type="molecule type" value="Genomic_DNA"/>
</dbReference>
<dbReference type="RefSeq" id="WP_011745366.1">
    <property type="nucleotide sequence ID" value="NC_008639.1"/>
</dbReference>
<dbReference type="SMR" id="A1BGM7"/>
<dbReference type="STRING" id="290317.Cpha266_1532"/>
<dbReference type="KEGG" id="cph:Cpha266_1532"/>
<dbReference type="eggNOG" id="COG0352">
    <property type="taxonomic scope" value="Bacteria"/>
</dbReference>
<dbReference type="HOGENOM" id="CLU_018272_3_4_10"/>
<dbReference type="OrthoDB" id="9812206at2"/>
<dbReference type="UniPathway" id="UPA00060">
    <property type="reaction ID" value="UER00141"/>
</dbReference>
<dbReference type="Proteomes" id="UP000008701">
    <property type="component" value="Chromosome"/>
</dbReference>
<dbReference type="GO" id="GO:0005737">
    <property type="term" value="C:cytoplasm"/>
    <property type="evidence" value="ECO:0007669"/>
    <property type="project" value="TreeGrafter"/>
</dbReference>
<dbReference type="GO" id="GO:0000287">
    <property type="term" value="F:magnesium ion binding"/>
    <property type="evidence" value="ECO:0007669"/>
    <property type="project" value="UniProtKB-UniRule"/>
</dbReference>
<dbReference type="GO" id="GO:0004789">
    <property type="term" value="F:thiamine-phosphate diphosphorylase activity"/>
    <property type="evidence" value="ECO:0007669"/>
    <property type="project" value="UniProtKB-UniRule"/>
</dbReference>
<dbReference type="GO" id="GO:0009228">
    <property type="term" value="P:thiamine biosynthetic process"/>
    <property type="evidence" value="ECO:0007669"/>
    <property type="project" value="UniProtKB-KW"/>
</dbReference>
<dbReference type="GO" id="GO:0009229">
    <property type="term" value="P:thiamine diphosphate biosynthetic process"/>
    <property type="evidence" value="ECO:0007669"/>
    <property type="project" value="UniProtKB-UniRule"/>
</dbReference>
<dbReference type="CDD" id="cd00564">
    <property type="entry name" value="TMP_TenI"/>
    <property type="match status" value="1"/>
</dbReference>
<dbReference type="FunFam" id="3.20.20.70:FF:000096">
    <property type="entry name" value="Thiamine-phosphate synthase"/>
    <property type="match status" value="1"/>
</dbReference>
<dbReference type="Gene3D" id="3.20.20.70">
    <property type="entry name" value="Aldolase class I"/>
    <property type="match status" value="1"/>
</dbReference>
<dbReference type="HAMAP" id="MF_00097">
    <property type="entry name" value="TMP_synthase"/>
    <property type="match status" value="1"/>
</dbReference>
<dbReference type="InterPro" id="IPR013785">
    <property type="entry name" value="Aldolase_TIM"/>
</dbReference>
<dbReference type="InterPro" id="IPR036206">
    <property type="entry name" value="ThiamineP_synth_sf"/>
</dbReference>
<dbReference type="InterPro" id="IPR022998">
    <property type="entry name" value="ThiamineP_synth_TenI"/>
</dbReference>
<dbReference type="InterPro" id="IPR034291">
    <property type="entry name" value="TMP_synthase"/>
</dbReference>
<dbReference type="NCBIfam" id="TIGR00693">
    <property type="entry name" value="thiE"/>
    <property type="match status" value="1"/>
</dbReference>
<dbReference type="PANTHER" id="PTHR20857:SF23">
    <property type="entry name" value="THIAMINE BIOSYNTHETIC BIFUNCTIONAL ENZYME"/>
    <property type="match status" value="1"/>
</dbReference>
<dbReference type="PANTHER" id="PTHR20857">
    <property type="entry name" value="THIAMINE-PHOSPHATE PYROPHOSPHORYLASE"/>
    <property type="match status" value="1"/>
</dbReference>
<dbReference type="Pfam" id="PF02581">
    <property type="entry name" value="TMP-TENI"/>
    <property type="match status" value="1"/>
</dbReference>
<dbReference type="SUPFAM" id="SSF51391">
    <property type="entry name" value="Thiamin phosphate synthase"/>
    <property type="match status" value="1"/>
</dbReference>
<accession>A1BGM7</accession>
<organism>
    <name type="scientific">Chlorobium phaeobacteroides (strain DSM 266 / SMG 266 / 2430)</name>
    <dbReference type="NCBI Taxonomy" id="290317"/>
    <lineage>
        <taxon>Bacteria</taxon>
        <taxon>Pseudomonadati</taxon>
        <taxon>Chlorobiota</taxon>
        <taxon>Chlorobiia</taxon>
        <taxon>Chlorobiales</taxon>
        <taxon>Chlorobiaceae</taxon>
        <taxon>Chlorobium/Pelodictyon group</taxon>
        <taxon>Chlorobium</taxon>
    </lineage>
</organism>
<reference key="1">
    <citation type="submission" date="2006-12" db="EMBL/GenBank/DDBJ databases">
        <title>Complete sequence of Chlorobium phaeobacteroides DSM 266.</title>
        <authorList>
            <consortium name="US DOE Joint Genome Institute"/>
            <person name="Copeland A."/>
            <person name="Lucas S."/>
            <person name="Lapidus A."/>
            <person name="Barry K."/>
            <person name="Detter J.C."/>
            <person name="Glavina del Rio T."/>
            <person name="Hammon N."/>
            <person name="Israni S."/>
            <person name="Pitluck S."/>
            <person name="Goltsman E."/>
            <person name="Schmutz J."/>
            <person name="Larimer F."/>
            <person name="Land M."/>
            <person name="Hauser L."/>
            <person name="Mikhailova N."/>
            <person name="Li T."/>
            <person name="Overmann J."/>
            <person name="Bryant D.A."/>
            <person name="Richardson P."/>
        </authorList>
    </citation>
    <scope>NUCLEOTIDE SEQUENCE [LARGE SCALE GENOMIC DNA]</scope>
    <source>
        <strain>DSM 266 / SMG 266 / 2430</strain>
    </source>
</reference>
<protein>
    <recommendedName>
        <fullName evidence="1">Thiamine-phosphate synthase</fullName>
        <shortName evidence="1">TP synthase</shortName>
        <shortName evidence="1">TPS</shortName>
        <ecNumber evidence="1">2.5.1.3</ecNumber>
    </recommendedName>
    <alternativeName>
        <fullName evidence="1">Thiamine-phosphate pyrophosphorylase</fullName>
        <shortName evidence="1">TMP pyrophosphorylase</shortName>
        <shortName evidence="1">TMP-PPase</shortName>
    </alternativeName>
</protein>
<gene>
    <name evidence="1" type="primary">thiE</name>
    <name type="ordered locus">Cpha266_1532</name>
</gene>
<name>THIE_CHLPD</name>
<keyword id="KW-0460">Magnesium</keyword>
<keyword id="KW-0479">Metal-binding</keyword>
<keyword id="KW-1185">Reference proteome</keyword>
<keyword id="KW-0784">Thiamine biosynthesis</keyword>
<keyword id="KW-0808">Transferase</keyword>
<sequence>MIPAKPFLCVITDEQCSSPVDLALMALEGGAEMIQLRHKSASGKQLFQWALDIQRLCRIHHAQFIVNDRVDIALAMNADGVHLGQQDLQPGEARKLLGTDKIIGVSTSSLTEALNAERAGADYIGFGHIFQTGSKNKLSAPLGSAAISAVVQRISIPLVAIGGINKMNMMETIAAGASGIAMIAAISRTADPEGATRAITELLKGH</sequence>
<proteinExistence type="inferred from homology"/>
<feature type="chain" id="PRO_0000336378" description="Thiamine-phosphate synthase">
    <location>
        <begin position="1"/>
        <end position="206"/>
    </location>
</feature>
<feature type="binding site" evidence="1">
    <location>
        <begin position="35"/>
        <end position="39"/>
    </location>
    <ligand>
        <name>4-amino-2-methyl-5-(diphosphooxymethyl)pyrimidine</name>
        <dbReference type="ChEBI" id="CHEBI:57841"/>
    </ligand>
</feature>
<feature type="binding site" evidence="1">
    <location>
        <position position="67"/>
    </location>
    <ligand>
        <name>4-amino-2-methyl-5-(diphosphooxymethyl)pyrimidine</name>
        <dbReference type="ChEBI" id="CHEBI:57841"/>
    </ligand>
</feature>
<feature type="binding site" evidence="1">
    <location>
        <position position="68"/>
    </location>
    <ligand>
        <name>Mg(2+)</name>
        <dbReference type="ChEBI" id="CHEBI:18420"/>
    </ligand>
</feature>
<feature type="binding site" evidence="1">
    <location>
        <position position="87"/>
    </location>
    <ligand>
        <name>Mg(2+)</name>
        <dbReference type="ChEBI" id="CHEBI:18420"/>
    </ligand>
</feature>
<feature type="binding site" evidence="1">
    <location>
        <position position="106"/>
    </location>
    <ligand>
        <name>4-amino-2-methyl-5-(diphosphooxymethyl)pyrimidine</name>
        <dbReference type="ChEBI" id="CHEBI:57841"/>
    </ligand>
</feature>
<feature type="binding site" evidence="1">
    <location>
        <begin position="132"/>
        <end position="134"/>
    </location>
    <ligand>
        <name>2-[(2R,5Z)-2-carboxy-4-methylthiazol-5(2H)-ylidene]ethyl phosphate</name>
        <dbReference type="ChEBI" id="CHEBI:62899"/>
    </ligand>
</feature>
<feature type="binding site" evidence="1">
    <location>
        <position position="135"/>
    </location>
    <ligand>
        <name>4-amino-2-methyl-5-(diphosphooxymethyl)pyrimidine</name>
        <dbReference type="ChEBI" id="CHEBI:57841"/>
    </ligand>
</feature>
<feature type="binding site" evidence="1">
    <location>
        <position position="163"/>
    </location>
    <ligand>
        <name>2-[(2R,5Z)-2-carboxy-4-methylthiazol-5(2H)-ylidene]ethyl phosphate</name>
        <dbReference type="ChEBI" id="CHEBI:62899"/>
    </ligand>
</feature>
<evidence type="ECO:0000255" key="1">
    <source>
        <dbReference type="HAMAP-Rule" id="MF_00097"/>
    </source>
</evidence>